<name>DCD_PYRFU</name>
<protein>
    <recommendedName>
        <fullName evidence="1">dCTP deaminase</fullName>
        <ecNumber evidence="1">3.5.4.13</ecNumber>
    </recommendedName>
    <alternativeName>
        <fullName evidence="1">Deoxycytidine triphosphate deaminase</fullName>
    </alternativeName>
</protein>
<comment type="function">
    <text evidence="1">Catalyzes the deamination of dCTP to dUTP.</text>
</comment>
<comment type="catalytic activity">
    <reaction evidence="1">
        <text>dCTP + H2O + H(+) = dUTP + NH4(+)</text>
        <dbReference type="Rhea" id="RHEA:22680"/>
        <dbReference type="ChEBI" id="CHEBI:15377"/>
        <dbReference type="ChEBI" id="CHEBI:15378"/>
        <dbReference type="ChEBI" id="CHEBI:28938"/>
        <dbReference type="ChEBI" id="CHEBI:61481"/>
        <dbReference type="ChEBI" id="CHEBI:61555"/>
        <dbReference type="EC" id="3.5.4.13"/>
    </reaction>
</comment>
<comment type="pathway">
    <text evidence="1">Pyrimidine metabolism; dUMP biosynthesis; dUMP from dCTP (dUTP route): step 1/2.</text>
</comment>
<comment type="subunit">
    <text evidence="1">Homotrimer.</text>
</comment>
<comment type="similarity">
    <text evidence="1">Belongs to the dCTP deaminase family.</text>
</comment>
<accession>Q8X251</accession>
<reference key="1">
    <citation type="journal article" date="2002" name="Proc. Natl. Acad. Sci. U.S.A.">
        <title>Archaeal dUTPase enhances PCR amplifications with archaeal DNA polymerases by preventing dUTP incorporation.</title>
        <authorList>
            <person name="Hogrefe H.H."/>
            <person name="Hansen C.J."/>
            <person name="Scott B.R."/>
            <person name="Nielson K.B."/>
        </authorList>
    </citation>
    <scope>NUCLEOTIDE SEQUENCE [GENOMIC DNA]</scope>
</reference>
<reference key="2">
    <citation type="journal article" date="1999" name="Genetics">
        <title>Divergence of the hyperthermophilic archaea Pyrococcus furiosus and P. horikoshii inferred from complete genomic sequences.</title>
        <authorList>
            <person name="Maeder D.L."/>
            <person name="Weiss R.B."/>
            <person name="Dunn D.M."/>
            <person name="Cherry J.L."/>
            <person name="Gonzalez J.M."/>
            <person name="DiRuggiero J."/>
            <person name="Robb F.T."/>
        </authorList>
    </citation>
    <scope>NUCLEOTIDE SEQUENCE [LARGE SCALE GENOMIC DNA]</scope>
    <source>
        <strain>ATCC 43587 / DSM 3638 / JCM 8422 / Vc1</strain>
    </source>
</reference>
<dbReference type="EC" id="3.5.4.13" evidence="1"/>
<dbReference type="EMBL" id="AY066005">
    <property type="protein sequence ID" value="AAL47572.1"/>
    <property type="molecule type" value="Genomic_DNA"/>
</dbReference>
<dbReference type="EMBL" id="AE009950">
    <property type="protein sequence ID" value="AAL82120.1"/>
    <property type="molecule type" value="Genomic_DNA"/>
</dbReference>
<dbReference type="RefSeq" id="WP_011013140.1">
    <property type="nucleotide sequence ID" value="NZ_CP023154.1"/>
</dbReference>
<dbReference type="SMR" id="Q8X251"/>
<dbReference type="STRING" id="186497.PF1996"/>
<dbReference type="PaxDb" id="186497-PF1996"/>
<dbReference type="GeneID" id="41713819"/>
<dbReference type="KEGG" id="pfu:PF1996"/>
<dbReference type="PATRIC" id="fig|186497.12.peg.2072"/>
<dbReference type="eggNOG" id="arCOG04048">
    <property type="taxonomic scope" value="Archaea"/>
</dbReference>
<dbReference type="HOGENOM" id="CLU_087476_3_1_2"/>
<dbReference type="OrthoDB" id="33242at2157"/>
<dbReference type="PhylomeDB" id="Q8X251"/>
<dbReference type="UniPathway" id="UPA00610">
    <property type="reaction ID" value="UER00665"/>
</dbReference>
<dbReference type="Proteomes" id="UP000001013">
    <property type="component" value="Chromosome"/>
</dbReference>
<dbReference type="GO" id="GO:0008829">
    <property type="term" value="F:dCTP deaminase activity"/>
    <property type="evidence" value="ECO:0007669"/>
    <property type="project" value="UniProtKB-UniRule"/>
</dbReference>
<dbReference type="GO" id="GO:0000166">
    <property type="term" value="F:nucleotide binding"/>
    <property type="evidence" value="ECO:0007669"/>
    <property type="project" value="UniProtKB-KW"/>
</dbReference>
<dbReference type="GO" id="GO:0006226">
    <property type="term" value="P:dUMP biosynthetic process"/>
    <property type="evidence" value="ECO:0007669"/>
    <property type="project" value="UniProtKB-UniPathway"/>
</dbReference>
<dbReference type="GO" id="GO:0006229">
    <property type="term" value="P:dUTP biosynthetic process"/>
    <property type="evidence" value="ECO:0007669"/>
    <property type="project" value="UniProtKB-UniRule"/>
</dbReference>
<dbReference type="CDD" id="cd07557">
    <property type="entry name" value="trimeric_dUTPase"/>
    <property type="match status" value="1"/>
</dbReference>
<dbReference type="Gene3D" id="2.70.40.10">
    <property type="match status" value="1"/>
</dbReference>
<dbReference type="HAMAP" id="MF_00146">
    <property type="entry name" value="dCTP_deaminase"/>
    <property type="match status" value="1"/>
</dbReference>
<dbReference type="InterPro" id="IPR011962">
    <property type="entry name" value="dCTP_deaminase"/>
</dbReference>
<dbReference type="InterPro" id="IPR036157">
    <property type="entry name" value="dUTPase-like_sf"/>
</dbReference>
<dbReference type="InterPro" id="IPR033704">
    <property type="entry name" value="dUTPase_trimeric"/>
</dbReference>
<dbReference type="NCBIfam" id="TIGR02274">
    <property type="entry name" value="dCTP_deam"/>
    <property type="match status" value="1"/>
</dbReference>
<dbReference type="PANTHER" id="PTHR42680">
    <property type="entry name" value="DCTP DEAMINASE"/>
    <property type="match status" value="1"/>
</dbReference>
<dbReference type="PANTHER" id="PTHR42680:SF3">
    <property type="entry name" value="DCTP DEAMINASE"/>
    <property type="match status" value="1"/>
</dbReference>
<dbReference type="Pfam" id="PF22769">
    <property type="entry name" value="DCD"/>
    <property type="match status" value="1"/>
</dbReference>
<dbReference type="SUPFAM" id="SSF51283">
    <property type="entry name" value="dUTPase-like"/>
    <property type="match status" value="1"/>
</dbReference>
<gene>
    <name evidence="1" type="primary">dcd</name>
    <name type="ordered locus">PF1996</name>
</gene>
<keyword id="KW-0378">Hydrolase</keyword>
<keyword id="KW-0546">Nucleotide metabolism</keyword>
<keyword id="KW-0547">Nucleotide-binding</keyword>
<keyword id="KW-1185">Reference proteome</keyword>
<feature type="chain" id="PRO_0000156036" description="dCTP deaminase">
    <location>
        <begin position="1"/>
        <end position="156"/>
    </location>
</feature>
<feature type="binding site" evidence="1">
    <location>
        <begin position="79"/>
        <end position="84"/>
    </location>
    <ligand>
        <name>dCTP</name>
        <dbReference type="ChEBI" id="CHEBI:61481"/>
    </ligand>
</feature>
<feature type="binding site" evidence="1">
    <location>
        <position position="95"/>
    </location>
    <ligand>
        <name>dCTP</name>
        <dbReference type="ChEBI" id="CHEBI:61481"/>
    </ligand>
</feature>
<feature type="binding site" evidence="1">
    <location>
        <position position="124"/>
    </location>
    <ligand>
        <name>dCTP</name>
        <dbReference type="ChEBI" id="CHEBI:61481"/>
    </ligand>
</feature>
<feature type="binding site" evidence="1">
    <location>
        <position position="138"/>
    </location>
    <ligand>
        <name>dCTP</name>
        <dbReference type="ChEBI" id="CHEBI:61481"/>
    </ligand>
</feature>
<organism>
    <name type="scientific">Pyrococcus furiosus (strain ATCC 43587 / DSM 3638 / JCM 8422 / Vc1)</name>
    <dbReference type="NCBI Taxonomy" id="186497"/>
    <lineage>
        <taxon>Archaea</taxon>
        <taxon>Methanobacteriati</taxon>
        <taxon>Methanobacteriota</taxon>
        <taxon>Thermococci</taxon>
        <taxon>Thermococcales</taxon>
        <taxon>Thermococcaceae</taxon>
        <taxon>Pyrococcus</taxon>
    </lineage>
</organism>
<sequence>MLLPDWKIRKEILIEPFSEESLQPAGYDLRVGREAFVKGKLIDVEKEGKVVIPPREYALILTLERIKLPDDVMGDMKIRSSLAREGVIGSFAWVDPGWDGNLTLMLYNASNEPVELRYGERFVQIAFIRLEGPARNPYRGNYQGSTRLAFSKRKKL</sequence>
<evidence type="ECO:0000255" key="1">
    <source>
        <dbReference type="HAMAP-Rule" id="MF_00146"/>
    </source>
</evidence>
<proteinExistence type="inferred from homology"/>